<dbReference type="EMBL" id="CP000241">
    <property type="protein sequence ID" value="ABF85322.1"/>
    <property type="molecule type" value="Genomic_DNA"/>
</dbReference>
<dbReference type="RefSeq" id="WP_001092746.1">
    <property type="nucleotide sequence ID" value="NC_008086.1"/>
</dbReference>
<dbReference type="SMR" id="Q1CRV0"/>
<dbReference type="KEGG" id="hpa:HPAG1_1255"/>
<dbReference type="HOGENOM" id="CLU_073626_1_1_7"/>
<dbReference type="GO" id="GO:0022627">
    <property type="term" value="C:cytosolic small ribosomal subunit"/>
    <property type="evidence" value="ECO:0007669"/>
    <property type="project" value="TreeGrafter"/>
</dbReference>
<dbReference type="GO" id="GO:0019843">
    <property type="term" value="F:rRNA binding"/>
    <property type="evidence" value="ECO:0007669"/>
    <property type="project" value="UniProtKB-UniRule"/>
</dbReference>
<dbReference type="GO" id="GO:0003735">
    <property type="term" value="F:structural constituent of ribosome"/>
    <property type="evidence" value="ECO:0007669"/>
    <property type="project" value="InterPro"/>
</dbReference>
<dbReference type="GO" id="GO:0006412">
    <property type="term" value="P:translation"/>
    <property type="evidence" value="ECO:0007669"/>
    <property type="project" value="UniProtKB-UniRule"/>
</dbReference>
<dbReference type="CDD" id="cd00364">
    <property type="entry name" value="Ribosomal_uS17"/>
    <property type="match status" value="1"/>
</dbReference>
<dbReference type="FunFam" id="2.40.50.140:FF:000108">
    <property type="entry name" value="30S ribosomal protein S17"/>
    <property type="match status" value="1"/>
</dbReference>
<dbReference type="Gene3D" id="2.40.50.140">
    <property type="entry name" value="Nucleic acid-binding proteins"/>
    <property type="match status" value="1"/>
</dbReference>
<dbReference type="HAMAP" id="MF_01345_B">
    <property type="entry name" value="Ribosomal_uS17_B"/>
    <property type="match status" value="1"/>
</dbReference>
<dbReference type="InterPro" id="IPR012340">
    <property type="entry name" value="NA-bd_OB-fold"/>
</dbReference>
<dbReference type="InterPro" id="IPR000266">
    <property type="entry name" value="Ribosomal_uS17"/>
</dbReference>
<dbReference type="InterPro" id="IPR019984">
    <property type="entry name" value="Ribosomal_uS17_bact/chlr"/>
</dbReference>
<dbReference type="InterPro" id="IPR019979">
    <property type="entry name" value="Ribosomal_uS17_CS"/>
</dbReference>
<dbReference type="NCBIfam" id="NF004123">
    <property type="entry name" value="PRK05610.1"/>
    <property type="match status" value="1"/>
</dbReference>
<dbReference type="NCBIfam" id="TIGR03635">
    <property type="entry name" value="uS17_bact"/>
    <property type="match status" value="1"/>
</dbReference>
<dbReference type="PANTHER" id="PTHR10744">
    <property type="entry name" value="40S RIBOSOMAL PROTEIN S11 FAMILY MEMBER"/>
    <property type="match status" value="1"/>
</dbReference>
<dbReference type="PANTHER" id="PTHR10744:SF1">
    <property type="entry name" value="SMALL RIBOSOMAL SUBUNIT PROTEIN US17M"/>
    <property type="match status" value="1"/>
</dbReference>
<dbReference type="Pfam" id="PF00366">
    <property type="entry name" value="Ribosomal_S17"/>
    <property type="match status" value="1"/>
</dbReference>
<dbReference type="PRINTS" id="PR00973">
    <property type="entry name" value="RIBOSOMALS17"/>
</dbReference>
<dbReference type="SUPFAM" id="SSF50249">
    <property type="entry name" value="Nucleic acid-binding proteins"/>
    <property type="match status" value="1"/>
</dbReference>
<dbReference type="PROSITE" id="PS00056">
    <property type="entry name" value="RIBOSOMAL_S17"/>
    <property type="match status" value="1"/>
</dbReference>
<protein>
    <recommendedName>
        <fullName evidence="1">Small ribosomal subunit protein uS17</fullName>
    </recommendedName>
    <alternativeName>
        <fullName evidence="2">30S ribosomal protein S17</fullName>
    </alternativeName>
</protein>
<name>RS17_HELPH</name>
<comment type="function">
    <text evidence="1">One of the primary rRNA binding proteins, it binds specifically to the 5'-end of 16S ribosomal RNA.</text>
</comment>
<comment type="subunit">
    <text evidence="1">Part of the 30S ribosomal subunit.</text>
</comment>
<comment type="similarity">
    <text evidence="1">Belongs to the universal ribosomal protein uS17 family.</text>
</comment>
<feature type="chain" id="PRO_0000255680" description="Small ribosomal subunit protein uS17">
    <location>
        <begin position="1"/>
        <end position="86"/>
    </location>
</feature>
<keyword id="KW-0687">Ribonucleoprotein</keyword>
<keyword id="KW-0689">Ribosomal protein</keyword>
<keyword id="KW-0694">RNA-binding</keyword>
<keyword id="KW-0699">rRNA-binding</keyword>
<evidence type="ECO:0000255" key="1">
    <source>
        <dbReference type="HAMAP-Rule" id="MF_01345"/>
    </source>
</evidence>
<evidence type="ECO:0000305" key="2"/>
<reference key="1">
    <citation type="journal article" date="2006" name="Proc. Natl. Acad. Sci. U.S.A.">
        <title>The complete genome sequence of a chronic atrophic gastritis Helicobacter pylori strain: evolution during disease progression.</title>
        <authorList>
            <person name="Oh J.D."/>
            <person name="Kling-Baeckhed H."/>
            <person name="Giannakis M."/>
            <person name="Xu J."/>
            <person name="Fulton R.S."/>
            <person name="Fulton L.A."/>
            <person name="Cordum H.S."/>
            <person name="Wang C."/>
            <person name="Elliott G."/>
            <person name="Edwards J."/>
            <person name="Mardis E.R."/>
            <person name="Engstrand L.G."/>
            <person name="Gordon J.I."/>
        </authorList>
    </citation>
    <scope>NUCLEOTIDE SEQUENCE [LARGE SCALE GENOMIC DNA]</scope>
    <source>
        <strain>HPAG1</strain>
    </source>
</reference>
<accession>Q1CRV0</accession>
<proteinExistence type="inferred from homology"/>
<organism>
    <name type="scientific">Helicobacter pylori (strain HPAG1)</name>
    <dbReference type="NCBI Taxonomy" id="357544"/>
    <lineage>
        <taxon>Bacteria</taxon>
        <taxon>Pseudomonadati</taxon>
        <taxon>Campylobacterota</taxon>
        <taxon>Epsilonproteobacteria</taxon>
        <taxon>Campylobacterales</taxon>
        <taxon>Helicobacteraceae</taxon>
        <taxon>Helicobacter</taxon>
    </lineage>
</organism>
<sequence length="86" mass="9939">MNTKEPHKRLVQGKVISKFAEKSAVILVERKVVHEKYRKIVKKFKKYTIHDENNQVKVGDFVSAIECRPLSKTKSFTLKEILVVGV</sequence>
<gene>
    <name evidence="1" type="primary">rpsQ</name>
    <name type="ordered locus">HPAG1_1255</name>
</gene>